<name>YHHJ_SHIFL</name>
<proteinExistence type="inferred from homology"/>
<feature type="chain" id="PRO_0000183009" description="Inner membrane transport permease YhhJ">
    <location>
        <begin position="1"/>
        <end position="374"/>
    </location>
</feature>
<feature type="topological domain" description="Cytoplasmic" evidence="2">
    <location>
        <begin position="1"/>
        <end position="22"/>
    </location>
</feature>
<feature type="transmembrane region" description="Helical" evidence="2">
    <location>
        <begin position="23"/>
        <end position="43"/>
    </location>
</feature>
<feature type="topological domain" description="Periplasmic" evidence="2">
    <location>
        <begin position="44"/>
        <end position="172"/>
    </location>
</feature>
<feature type="transmembrane region" description="Helical" evidence="2">
    <location>
        <begin position="173"/>
        <end position="193"/>
    </location>
</feature>
<feature type="topological domain" description="Cytoplasmic" evidence="2">
    <location>
        <begin position="194"/>
        <end position="229"/>
    </location>
</feature>
<feature type="transmembrane region" description="Helical" evidence="2">
    <location>
        <begin position="230"/>
        <end position="250"/>
    </location>
</feature>
<feature type="topological domain" description="Periplasmic" evidence="2">
    <location>
        <begin position="251"/>
        <end position="255"/>
    </location>
</feature>
<feature type="transmembrane region" description="Helical" evidence="2">
    <location>
        <begin position="256"/>
        <end position="276"/>
    </location>
</feature>
<feature type="topological domain" description="Cytoplasmic" evidence="2">
    <location>
        <begin position="277"/>
        <end position="283"/>
    </location>
</feature>
<feature type="transmembrane region" description="Helical" evidence="2">
    <location>
        <begin position="284"/>
        <end position="304"/>
    </location>
</feature>
<feature type="topological domain" description="Periplasmic" evidence="2">
    <location>
        <begin position="305"/>
        <end position="342"/>
    </location>
</feature>
<feature type="transmembrane region" description="Helical" evidence="2">
    <location>
        <begin position="343"/>
        <end position="363"/>
    </location>
</feature>
<feature type="topological domain" description="Cytoplasmic" evidence="2">
    <location>
        <begin position="364"/>
        <end position="374"/>
    </location>
</feature>
<feature type="domain" description="ABC transmembrane type-2" evidence="3">
    <location>
        <begin position="133"/>
        <end position="369"/>
    </location>
</feature>
<evidence type="ECO:0000250" key="1"/>
<evidence type="ECO:0000255" key="2"/>
<evidence type="ECO:0000255" key="3">
    <source>
        <dbReference type="PROSITE-ProRule" id="PRU00442"/>
    </source>
</evidence>
<evidence type="ECO:0000305" key="4"/>
<accession>P0AGH2</accession>
<accession>P31993</accession>
<accession>P76703</accession>
<keyword id="KW-0997">Cell inner membrane</keyword>
<keyword id="KW-1003">Cell membrane</keyword>
<keyword id="KW-0472">Membrane</keyword>
<keyword id="KW-1185">Reference proteome</keyword>
<keyword id="KW-0812">Transmembrane</keyword>
<keyword id="KW-1133">Transmembrane helix</keyword>
<keyword id="KW-0813">Transport</keyword>
<comment type="subcellular location">
    <subcellularLocation>
        <location evidence="1">Cell inner membrane</location>
        <topology evidence="1">Multi-pass membrane protein</topology>
    </subcellularLocation>
</comment>
<comment type="similarity">
    <text evidence="4">Belongs to the ABC-2 integral membrane protein family.</text>
</comment>
<sequence length="374" mass="41062">MRHLRNIFNLGIKELRSLLGDKAMLTLIVFSFTVSVYSSATVTPGSLNLAPIAIADMDQSQLSNRIVNSFYRPWFLPPEMITADEMDAGLDAGRYTFAINIPPNFQRDVLAGRQPDIQVNVDATRMSQAFTGNGYIQNIINGEVNSFVARYRDNSEPLVSLETRMRFNPNLDPAWFGGVMAIINNITMLAIVLTGSALIREREHGTVEHLLVMPITPFEIMMAKIWSMGLVVLVVSGLSLVLMVKGVLGVPIEGSIPLFMLGVALSLFATTSIGIFMGTIARSMPQLGLLVILVLLPLQMLSGGSTPRESMPQMVQDIMLTMPTTHFVSLAQAILYRGAGFEIVWPQFLTLMAIGGAFFTIALLRFRKTIGTMA</sequence>
<protein>
    <recommendedName>
        <fullName>Inner membrane transport permease YhhJ</fullName>
    </recommendedName>
</protein>
<dbReference type="EMBL" id="AE005674">
    <property type="protein sequence ID" value="AAN44960.2"/>
    <property type="molecule type" value="Genomic_DNA"/>
</dbReference>
<dbReference type="EMBL" id="AE014073">
    <property type="protein sequence ID" value="AAP19222.1"/>
    <property type="molecule type" value="Genomic_DNA"/>
</dbReference>
<dbReference type="RefSeq" id="NP_709253.2">
    <property type="nucleotide sequence ID" value="NC_004337.2"/>
</dbReference>
<dbReference type="RefSeq" id="WP_001216257.1">
    <property type="nucleotide sequence ID" value="NZ_WPGW01000010.1"/>
</dbReference>
<dbReference type="SMR" id="P0AGH2"/>
<dbReference type="STRING" id="198214.SF3501"/>
<dbReference type="PaxDb" id="198214-SF3501"/>
<dbReference type="GeneID" id="1026449"/>
<dbReference type="KEGG" id="sfl:SF3501"/>
<dbReference type="KEGG" id="sfx:S4262"/>
<dbReference type="PATRIC" id="fig|198214.7.peg.4122"/>
<dbReference type="HOGENOM" id="CLU_039483_8_1_6"/>
<dbReference type="Proteomes" id="UP000001006">
    <property type="component" value="Chromosome"/>
</dbReference>
<dbReference type="Proteomes" id="UP000002673">
    <property type="component" value="Chromosome"/>
</dbReference>
<dbReference type="GO" id="GO:0005886">
    <property type="term" value="C:plasma membrane"/>
    <property type="evidence" value="ECO:0007669"/>
    <property type="project" value="UniProtKB-SubCell"/>
</dbReference>
<dbReference type="GO" id="GO:0140359">
    <property type="term" value="F:ABC-type transporter activity"/>
    <property type="evidence" value="ECO:0007669"/>
    <property type="project" value="InterPro"/>
</dbReference>
<dbReference type="FunFam" id="3.40.1710.10:FF:000003">
    <property type="entry name" value="ABC transporter permease"/>
    <property type="match status" value="1"/>
</dbReference>
<dbReference type="Gene3D" id="3.40.1710.10">
    <property type="entry name" value="abc type-2 transporter like domain"/>
    <property type="match status" value="1"/>
</dbReference>
<dbReference type="InterPro" id="IPR051449">
    <property type="entry name" value="ABC-2_transporter_component"/>
</dbReference>
<dbReference type="InterPro" id="IPR013525">
    <property type="entry name" value="ABC2_TM"/>
</dbReference>
<dbReference type="InterPro" id="IPR047817">
    <property type="entry name" value="ABC2_TM_bact-type"/>
</dbReference>
<dbReference type="PANTHER" id="PTHR30294:SF47">
    <property type="entry name" value="INNER MEMBRANE TRANSPORT PERMEASE YHHJ"/>
    <property type="match status" value="1"/>
</dbReference>
<dbReference type="PANTHER" id="PTHR30294">
    <property type="entry name" value="MEMBRANE COMPONENT OF ABC TRANSPORTER YHHJ-RELATED"/>
    <property type="match status" value="1"/>
</dbReference>
<dbReference type="Pfam" id="PF12698">
    <property type="entry name" value="ABC2_membrane_3"/>
    <property type="match status" value="1"/>
</dbReference>
<dbReference type="PROSITE" id="PS51012">
    <property type="entry name" value="ABC_TM2"/>
    <property type="match status" value="1"/>
</dbReference>
<reference key="1">
    <citation type="journal article" date="2002" name="Nucleic Acids Res.">
        <title>Genome sequence of Shigella flexneri 2a: insights into pathogenicity through comparison with genomes of Escherichia coli K12 and O157.</title>
        <authorList>
            <person name="Jin Q."/>
            <person name="Yuan Z."/>
            <person name="Xu J."/>
            <person name="Wang Y."/>
            <person name="Shen Y."/>
            <person name="Lu W."/>
            <person name="Wang J."/>
            <person name="Liu H."/>
            <person name="Yang J."/>
            <person name="Yang F."/>
            <person name="Zhang X."/>
            <person name="Zhang J."/>
            <person name="Yang G."/>
            <person name="Wu H."/>
            <person name="Qu D."/>
            <person name="Dong J."/>
            <person name="Sun L."/>
            <person name="Xue Y."/>
            <person name="Zhao A."/>
            <person name="Gao Y."/>
            <person name="Zhu J."/>
            <person name="Kan B."/>
            <person name="Ding K."/>
            <person name="Chen S."/>
            <person name="Cheng H."/>
            <person name="Yao Z."/>
            <person name="He B."/>
            <person name="Chen R."/>
            <person name="Ma D."/>
            <person name="Qiang B."/>
            <person name="Wen Y."/>
            <person name="Hou Y."/>
            <person name="Yu J."/>
        </authorList>
    </citation>
    <scope>NUCLEOTIDE SEQUENCE [LARGE SCALE GENOMIC DNA]</scope>
    <source>
        <strain>301 / Serotype 2a</strain>
    </source>
</reference>
<reference key="2">
    <citation type="journal article" date="2003" name="Infect. Immun.">
        <title>Complete genome sequence and comparative genomics of Shigella flexneri serotype 2a strain 2457T.</title>
        <authorList>
            <person name="Wei J."/>
            <person name="Goldberg M.B."/>
            <person name="Burland V."/>
            <person name="Venkatesan M.M."/>
            <person name="Deng W."/>
            <person name="Fournier G."/>
            <person name="Mayhew G.F."/>
            <person name="Plunkett G. III"/>
            <person name="Rose D.J."/>
            <person name="Darling A."/>
            <person name="Mau B."/>
            <person name="Perna N.T."/>
            <person name="Payne S.M."/>
            <person name="Runyen-Janecky L.J."/>
            <person name="Zhou S."/>
            <person name="Schwartz D.C."/>
            <person name="Blattner F.R."/>
        </authorList>
    </citation>
    <scope>NUCLEOTIDE SEQUENCE [LARGE SCALE GENOMIC DNA]</scope>
    <source>
        <strain>ATCC 700930 / 2457T / Serotype 2a</strain>
    </source>
</reference>
<organism>
    <name type="scientific">Shigella flexneri</name>
    <dbReference type="NCBI Taxonomy" id="623"/>
    <lineage>
        <taxon>Bacteria</taxon>
        <taxon>Pseudomonadati</taxon>
        <taxon>Pseudomonadota</taxon>
        <taxon>Gammaproteobacteria</taxon>
        <taxon>Enterobacterales</taxon>
        <taxon>Enterobacteriaceae</taxon>
        <taxon>Shigella</taxon>
    </lineage>
</organism>
<gene>
    <name type="primary">yhhJ</name>
    <name type="ordered locus">SF3501</name>
    <name type="ordered locus">S4262</name>
</gene>